<dbReference type="EC" id="7.6.2.7" evidence="1"/>
<dbReference type="EMBL" id="AY316746">
    <property type="protein sequence ID" value="AAQ87106.1"/>
    <property type="status" value="ALT_INIT"/>
    <property type="molecule type" value="Genomic_DNA"/>
</dbReference>
<dbReference type="EMBL" id="CP000874">
    <property type="protein sequence ID" value="ACP23213.1"/>
    <property type="molecule type" value="Genomic_DNA"/>
</dbReference>
<dbReference type="RefSeq" id="WP_015887836.1">
    <property type="nucleotide sequence ID" value="NC_012586.1"/>
</dbReference>
<dbReference type="RefSeq" id="YP_002823966.1">
    <property type="nucleotide sequence ID" value="NC_012586.1"/>
</dbReference>
<dbReference type="SMR" id="Q6W2B1"/>
<dbReference type="KEGG" id="rhi:NGR_b17620"/>
<dbReference type="PATRIC" id="fig|394.7.peg.2179"/>
<dbReference type="HOGENOM" id="CLU_000604_1_22_5"/>
<dbReference type="OrthoDB" id="9807242at2"/>
<dbReference type="Proteomes" id="UP000001054">
    <property type="component" value="Plasmid pNGR234b"/>
</dbReference>
<dbReference type="GO" id="GO:0005886">
    <property type="term" value="C:plasma membrane"/>
    <property type="evidence" value="ECO:0007669"/>
    <property type="project" value="UniProtKB-SubCell"/>
</dbReference>
<dbReference type="GO" id="GO:0015411">
    <property type="term" value="F:ABC-type taurine transporter transporter activity"/>
    <property type="evidence" value="ECO:0007669"/>
    <property type="project" value="UniProtKB-EC"/>
</dbReference>
<dbReference type="GO" id="GO:0005524">
    <property type="term" value="F:ATP binding"/>
    <property type="evidence" value="ECO:0007669"/>
    <property type="project" value="UniProtKB-KW"/>
</dbReference>
<dbReference type="GO" id="GO:0016887">
    <property type="term" value="F:ATP hydrolysis activity"/>
    <property type="evidence" value="ECO:0007669"/>
    <property type="project" value="InterPro"/>
</dbReference>
<dbReference type="CDD" id="cd03293">
    <property type="entry name" value="ABC_NrtD_SsuB_transporters"/>
    <property type="match status" value="1"/>
</dbReference>
<dbReference type="Gene3D" id="3.40.50.300">
    <property type="entry name" value="P-loop containing nucleotide triphosphate hydrolases"/>
    <property type="match status" value="1"/>
</dbReference>
<dbReference type="InterPro" id="IPR003593">
    <property type="entry name" value="AAA+_ATPase"/>
</dbReference>
<dbReference type="InterPro" id="IPR003439">
    <property type="entry name" value="ABC_transporter-like_ATP-bd"/>
</dbReference>
<dbReference type="InterPro" id="IPR017871">
    <property type="entry name" value="ABC_transporter-like_CS"/>
</dbReference>
<dbReference type="InterPro" id="IPR050166">
    <property type="entry name" value="ABC_transporter_ATP-bind"/>
</dbReference>
<dbReference type="InterPro" id="IPR027417">
    <property type="entry name" value="P-loop_NTPase"/>
</dbReference>
<dbReference type="PANTHER" id="PTHR42788:SF18">
    <property type="entry name" value="TAURINE IMPORT ATP-BINDING PROTEIN TAUB"/>
    <property type="match status" value="1"/>
</dbReference>
<dbReference type="PANTHER" id="PTHR42788">
    <property type="entry name" value="TAURINE IMPORT ATP-BINDING PROTEIN-RELATED"/>
    <property type="match status" value="1"/>
</dbReference>
<dbReference type="Pfam" id="PF00005">
    <property type="entry name" value="ABC_tran"/>
    <property type="match status" value="1"/>
</dbReference>
<dbReference type="SMART" id="SM00382">
    <property type="entry name" value="AAA"/>
    <property type="match status" value="1"/>
</dbReference>
<dbReference type="SUPFAM" id="SSF52540">
    <property type="entry name" value="P-loop containing nucleoside triphosphate hydrolases"/>
    <property type="match status" value="1"/>
</dbReference>
<dbReference type="PROSITE" id="PS00211">
    <property type="entry name" value="ABC_TRANSPORTER_1"/>
    <property type="match status" value="1"/>
</dbReference>
<dbReference type="PROSITE" id="PS50893">
    <property type="entry name" value="ABC_TRANSPORTER_2"/>
    <property type="match status" value="1"/>
</dbReference>
<dbReference type="PROSITE" id="PS51250">
    <property type="entry name" value="TAUB"/>
    <property type="match status" value="1"/>
</dbReference>
<name>TAUB_SINFN</name>
<accession>Q6W2B1</accession>
<accession>C3KLC7</accession>
<feature type="chain" id="PRO_0000093017" description="Taurine import ATP-binding protein TauB">
    <location>
        <begin position="1"/>
        <end position="267"/>
    </location>
</feature>
<feature type="domain" description="ABC transporter" evidence="1">
    <location>
        <begin position="6"/>
        <end position="238"/>
    </location>
</feature>
<feature type="binding site" evidence="1">
    <location>
        <begin position="43"/>
        <end position="50"/>
    </location>
    <ligand>
        <name>ATP</name>
        <dbReference type="ChEBI" id="CHEBI:30616"/>
    </ligand>
</feature>
<reference key="1">
    <citation type="journal article" date="2004" name="J. Bacteriol.">
        <title>An evolutionary hot spot: the pNGR234b replicon of Rhizobium sp. strain NGR234.</title>
        <authorList>
            <person name="Streit W.R."/>
            <person name="Schmitz R.A."/>
            <person name="Perret X."/>
            <person name="Staehelin C."/>
            <person name="Deakin W.J."/>
            <person name="Raasch C."/>
            <person name="Liesegang H."/>
            <person name="Broughton W.J."/>
        </authorList>
    </citation>
    <scope>NUCLEOTIDE SEQUENCE [LARGE SCALE GENOMIC DNA]</scope>
    <source>
        <strain>NBRC 101917 / NGR234</strain>
    </source>
</reference>
<reference key="2">
    <citation type="journal article" date="2009" name="Appl. Environ. Microbiol.">
        <title>Rhizobium sp. strain NGR234 possesses a remarkable number of secretion systems.</title>
        <authorList>
            <person name="Schmeisser C."/>
            <person name="Liesegang H."/>
            <person name="Krysciak D."/>
            <person name="Bakkou N."/>
            <person name="Le Quere A."/>
            <person name="Wollherr A."/>
            <person name="Heinemeyer I."/>
            <person name="Morgenstern B."/>
            <person name="Pommerening-Roeser A."/>
            <person name="Flores M."/>
            <person name="Palacios R."/>
            <person name="Brenner S."/>
            <person name="Gottschalk G."/>
            <person name="Schmitz R.A."/>
            <person name="Broughton W.J."/>
            <person name="Perret X."/>
            <person name="Strittmatter A.W."/>
            <person name="Streit W.R."/>
        </authorList>
    </citation>
    <scope>NUCLEOTIDE SEQUENCE [LARGE SCALE GENOMIC DNA]</scope>
    <source>
        <strain>NBRC 101917 / NGR234</strain>
    </source>
</reference>
<organism>
    <name type="scientific">Sinorhizobium fredii (strain NBRC 101917 / NGR234)</name>
    <dbReference type="NCBI Taxonomy" id="394"/>
    <lineage>
        <taxon>Bacteria</taxon>
        <taxon>Pseudomonadati</taxon>
        <taxon>Pseudomonadota</taxon>
        <taxon>Alphaproteobacteria</taxon>
        <taxon>Hyphomicrobiales</taxon>
        <taxon>Rhizobiaceae</taxon>
        <taxon>Sinorhizobium/Ensifer group</taxon>
        <taxon>Sinorhizobium</taxon>
    </lineage>
</organism>
<protein>
    <recommendedName>
        <fullName evidence="1">Taurine import ATP-binding protein TauB</fullName>
        <ecNumber evidence="1">7.6.2.7</ecNumber>
    </recommendedName>
</protein>
<sequence length="267" mass="28583">MSQLSFNEASLIYPARGRDGAAQLVLDRINLSVSTGEFVVVIGRSGSGKTSLLNLAAGFQEPSEGKVALDGKIIEGPGSDRAVVFQDDALYPWLDARDNVAFPLRIKGMGERDRRARAGELLELVGLPEAGKRRIWELSGGMRQRVGIARALAAEPRFLLLDEPLGALDALTRSRLQTFLLDVWRKSRSGALLITHSIDEALLLATRIVVLSPNPGRVAADIPSSFAADILAGAPASEVRASPAFKRMHDGLTGLIQAIGPEEELAA</sequence>
<geneLocation type="plasmid">
    <name>sym pNGR234b</name>
</geneLocation>
<evidence type="ECO:0000255" key="1">
    <source>
        <dbReference type="HAMAP-Rule" id="MF_01714"/>
    </source>
</evidence>
<evidence type="ECO:0000305" key="2"/>
<comment type="function">
    <text evidence="1">Part of the ABC transporter complex TauABC involved in taurine import. Responsible for energy coupling to the transport system.</text>
</comment>
<comment type="catalytic activity">
    <reaction evidence="1">
        <text>taurine(out) + ATP + H2O = taurine(in) + ADP + phosphate + H(+)</text>
        <dbReference type="Rhea" id="RHEA:14613"/>
        <dbReference type="ChEBI" id="CHEBI:15377"/>
        <dbReference type="ChEBI" id="CHEBI:15378"/>
        <dbReference type="ChEBI" id="CHEBI:30616"/>
        <dbReference type="ChEBI" id="CHEBI:43474"/>
        <dbReference type="ChEBI" id="CHEBI:456216"/>
        <dbReference type="ChEBI" id="CHEBI:507393"/>
        <dbReference type="EC" id="7.6.2.7"/>
    </reaction>
</comment>
<comment type="subunit">
    <text evidence="1">The complex is composed of two ATP-binding proteins (TauB), two transmembrane proteins (TauC) and a solute-binding protein (TauA).</text>
</comment>
<comment type="subcellular location">
    <subcellularLocation>
        <location evidence="1">Cell inner membrane</location>
        <topology evidence="1">Peripheral membrane protein</topology>
    </subcellularLocation>
</comment>
<comment type="similarity">
    <text evidence="1">Belongs to the ABC transporter superfamily. Taurine importer (TC 3.A.1.17.1) family.</text>
</comment>
<comment type="sequence caution" evidence="2">
    <conflict type="erroneous initiation">
        <sequence resource="EMBL-CDS" id="AAQ87106"/>
    </conflict>
</comment>
<keyword id="KW-0067">ATP-binding</keyword>
<keyword id="KW-0997">Cell inner membrane</keyword>
<keyword id="KW-1003">Cell membrane</keyword>
<keyword id="KW-0472">Membrane</keyword>
<keyword id="KW-0547">Nucleotide-binding</keyword>
<keyword id="KW-0614">Plasmid</keyword>
<keyword id="KW-1185">Reference proteome</keyword>
<keyword id="KW-1278">Translocase</keyword>
<keyword id="KW-0813">Transport</keyword>
<gene>
    <name evidence="1" type="primary">tauB</name>
    <name type="ordered locus">NGR_b17620</name>
    <name type="ORF">RNGR00080</name>
</gene>
<proteinExistence type="inferred from homology"/>